<feature type="chain" id="PRO_0000460366" description="Aspartate ammonia-lyase">
    <location>
        <begin position="1"/>
        <end position="474"/>
    </location>
</feature>
<feature type="region of interest" description="SS loop" evidence="2">
    <location>
        <begin position="322"/>
        <end position="331"/>
    </location>
</feature>
<feature type="active site" description="Proton acceptor" evidence="2">
    <location>
        <position position="323"/>
    </location>
</feature>
<feature type="binding site" evidence="2">
    <location>
        <position position="105"/>
    </location>
    <ligand>
        <name>L-aspartate</name>
        <dbReference type="ChEBI" id="CHEBI:29991"/>
    </ligand>
</feature>
<feature type="binding site" evidence="2">
    <location>
        <position position="144"/>
    </location>
    <ligand>
        <name>L-aspartate</name>
        <dbReference type="ChEBI" id="CHEBI:29991"/>
    </ligand>
</feature>
<feature type="binding site" evidence="2">
    <location>
        <position position="145"/>
    </location>
    <ligand>
        <name>L-aspartate</name>
        <dbReference type="ChEBI" id="CHEBI:29991"/>
    </ligand>
</feature>
<feature type="binding site" evidence="2">
    <location>
        <position position="146"/>
    </location>
    <ligand>
        <name>L-aspartate</name>
        <dbReference type="ChEBI" id="CHEBI:29991"/>
    </ligand>
</feature>
<feature type="binding site" evidence="2">
    <location>
        <position position="191"/>
    </location>
    <ligand>
        <name>L-aspartate</name>
        <dbReference type="ChEBI" id="CHEBI:29991"/>
    </ligand>
</feature>
<feature type="binding site" evidence="2">
    <location>
        <position position="324"/>
    </location>
    <ligand>
        <name>L-aspartate</name>
        <dbReference type="ChEBI" id="CHEBI:29991"/>
    </ligand>
</feature>
<feature type="binding site" evidence="2">
    <location>
        <position position="329"/>
    </location>
    <ligand>
        <name>L-aspartate</name>
        <dbReference type="ChEBI" id="CHEBI:29991"/>
    </ligand>
</feature>
<accession>P0DXC8</accession>
<sequence length="474" mass="51095">MSSAASFRTEKDLLGVLEVPAQAYYGIQTLRAINNFRLSGVPISHYPKLVVGLAMVKQAAADANRELGQLSEAKHAAISEACARLIRGDFHEEFVVDMIQGGAGTSTNMNANEVIANIALEAMGHQKGEYQYLHPNNDVNMAQSTNDAYPTAIRLGLLLGHDALLASLDSLIQAFAAKGEEFSHVLKMGRTQLQDAVPMTLGQEFRAFATTLSEDLARLKTLAPELLTEVNLGGTAIGTGINADPRYQALAVQRLATISGQPLVPAADLIEATSDMGAFVLFSGMLKRTAVKLSKICNDLRLLSSGPRTGINEINLPARQPGSSIMPGKVNPVIPEAVNQVAFQIIGNDLALTMAAEGGQLQLNVMEPLIAFKIFDSIRLLQRAMDMLREHCIVGITANEARCRELVEHSIGLVTALNPYIGYENATRIARVALESGRGVLELVREEGLLDDAMLDDILRPENMIAPRLVPLKA</sequence>
<organism>
    <name type="scientific">Pseudomonas canavaninivorans</name>
    <dbReference type="NCBI Taxonomy" id="2842348"/>
    <lineage>
        <taxon>Bacteria</taxon>
        <taxon>Pseudomonadati</taxon>
        <taxon>Pseudomonadota</taxon>
        <taxon>Gammaproteobacteria</taxon>
        <taxon>Pseudomonadales</taxon>
        <taxon>Pseudomonadaceae</taxon>
        <taxon>Pseudomonas</taxon>
    </lineage>
</organism>
<gene>
    <name evidence="7" type="ORF">JFQ02_04125</name>
</gene>
<comment type="function">
    <text evidence="3">Lyase involved in the degradation of canavanine, the delta-oxa-analog of arginine, allowing growth on canavanine as sole nitrogen and carbon source (PubMed:36320885). Probably catalyzes the conversion of L-aspartate to fumarate and ammonia (PubMed:36320885).</text>
</comment>
<comment type="catalytic activity">
    <reaction evidence="6">
        <text>L-aspartate = fumarate + NH4(+)</text>
        <dbReference type="Rhea" id="RHEA:16601"/>
        <dbReference type="ChEBI" id="CHEBI:28938"/>
        <dbReference type="ChEBI" id="CHEBI:29806"/>
        <dbReference type="ChEBI" id="CHEBI:29991"/>
        <dbReference type="EC" id="4.3.1.1"/>
    </reaction>
    <physiologicalReaction direction="left-to-right" evidence="6">
        <dbReference type="Rhea" id="RHEA:16602"/>
    </physiologicalReaction>
</comment>
<comment type="subunit">
    <text evidence="1">Homotetramer.</text>
</comment>
<comment type="induction">
    <text evidence="3">Up-regulated upon growth on canavanine.</text>
</comment>
<comment type="similarity">
    <text evidence="5">Belongs to the class-II fumarase/aspartase family. Aspartase subfamily.</text>
</comment>
<proteinExistence type="evidence at transcript level"/>
<dbReference type="EC" id="4.3.1.1" evidence="6"/>
<dbReference type="EMBL" id="JAEKIK010000003">
    <property type="protein sequence ID" value="MBJ2345991.1"/>
    <property type="molecule type" value="Genomic_DNA"/>
</dbReference>
<dbReference type="SMR" id="P0DXC8"/>
<dbReference type="GO" id="GO:0005829">
    <property type="term" value="C:cytosol"/>
    <property type="evidence" value="ECO:0007669"/>
    <property type="project" value="TreeGrafter"/>
</dbReference>
<dbReference type="GO" id="GO:0008797">
    <property type="term" value="F:aspartate ammonia-lyase activity"/>
    <property type="evidence" value="ECO:0007669"/>
    <property type="project" value="InterPro"/>
</dbReference>
<dbReference type="GO" id="GO:0006531">
    <property type="term" value="P:aspartate metabolic process"/>
    <property type="evidence" value="ECO:0007669"/>
    <property type="project" value="InterPro"/>
</dbReference>
<dbReference type="GO" id="GO:0006099">
    <property type="term" value="P:tricarboxylic acid cycle"/>
    <property type="evidence" value="ECO:0007669"/>
    <property type="project" value="InterPro"/>
</dbReference>
<dbReference type="CDD" id="cd01357">
    <property type="entry name" value="Aspartase"/>
    <property type="match status" value="1"/>
</dbReference>
<dbReference type="FunFam" id="1.10.40.30:FF:000002">
    <property type="entry name" value="Fumarate hydratase class II"/>
    <property type="match status" value="1"/>
</dbReference>
<dbReference type="FunFam" id="1.10.275.10:FF:000001">
    <property type="entry name" value="Fumarate hydratase, mitochondrial"/>
    <property type="match status" value="1"/>
</dbReference>
<dbReference type="FunFam" id="1.20.200.10:FF:000001">
    <property type="entry name" value="Fumarate hydratase, mitochondrial"/>
    <property type="match status" value="1"/>
</dbReference>
<dbReference type="Gene3D" id="1.10.40.30">
    <property type="entry name" value="Fumarase/aspartase (C-terminal domain)"/>
    <property type="match status" value="1"/>
</dbReference>
<dbReference type="Gene3D" id="1.20.200.10">
    <property type="entry name" value="Fumarase/aspartase (Central domain)"/>
    <property type="match status" value="1"/>
</dbReference>
<dbReference type="Gene3D" id="1.10.275.10">
    <property type="entry name" value="Fumarase/aspartase (N-terminal domain)"/>
    <property type="match status" value="1"/>
</dbReference>
<dbReference type="InterPro" id="IPR004708">
    <property type="entry name" value="ApsA"/>
</dbReference>
<dbReference type="InterPro" id="IPR051546">
    <property type="entry name" value="Aspartate_Ammonia-Lyase"/>
</dbReference>
<dbReference type="InterPro" id="IPR024083">
    <property type="entry name" value="Fumarase/histidase_N"/>
</dbReference>
<dbReference type="InterPro" id="IPR018951">
    <property type="entry name" value="Fumarase_C_C"/>
</dbReference>
<dbReference type="InterPro" id="IPR020557">
    <property type="entry name" value="Fumarate_lyase_CS"/>
</dbReference>
<dbReference type="InterPro" id="IPR000362">
    <property type="entry name" value="Fumarate_lyase_fam"/>
</dbReference>
<dbReference type="InterPro" id="IPR022761">
    <property type="entry name" value="Fumarate_lyase_N"/>
</dbReference>
<dbReference type="InterPro" id="IPR008948">
    <property type="entry name" value="L-Aspartase-like"/>
</dbReference>
<dbReference type="NCBIfam" id="TIGR00839">
    <property type="entry name" value="aspA"/>
    <property type="match status" value="1"/>
</dbReference>
<dbReference type="NCBIfam" id="NF008909">
    <property type="entry name" value="PRK12273.1"/>
    <property type="match status" value="1"/>
</dbReference>
<dbReference type="PANTHER" id="PTHR42696">
    <property type="entry name" value="ASPARTATE AMMONIA-LYASE"/>
    <property type="match status" value="1"/>
</dbReference>
<dbReference type="PANTHER" id="PTHR42696:SF2">
    <property type="entry name" value="ASPARTATE AMMONIA-LYASE"/>
    <property type="match status" value="1"/>
</dbReference>
<dbReference type="Pfam" id="PF10415">
    <property type="entry name" value="FumaraseC_C"/>
    <property type="match status" value="1"/>
</dbReference>
<dbReference type="Pfam" id="PF00206">
    <property type="entry name" value="Lyase_1"/>
    <property type="match status" value="1"/>
</dbReference>
<dbReference type="PRINTS" id="PR00145">
    <property type="entry name" value="ARGSUCLYASE"/>
</dbReference>
<dbReference type="PRINTS" id="PR00149">
    <property type="entry name" value="FUMRATELYASE"/>
</dbReference>
<dbReference type="SUPFAM" id="SSF48557">
    <property type="entry name" value="L-aspartase-like"/>
    <property type="match status" value="1"/>
</dbReference>
<dbReference type="PROSITE" id="PS00163">
    <property type="entry name" value="FUMARATE_LYASES"/>
    <property type="match status" value="1"/>
</dbReference>
<name>ASPA_PSECO</name>
<evidence type="ECO:0000250" key="1">
    <source>
        <dbReference type="UniProtKB" id="P0AC38"/>
    </source>
</evidence>
<evidence type="ECO:0000250" key="2">
    <source>
        <dbReference type="UniProtKB" id="Q9LCC6"/>
    </source>
</evidence>
<evidence type="ECO:0000269" key="3">
    <source>
    </source>
</evidence>
<evidence type="ECO:0000303" key="4">
    <source>
    </source>
</evidence>
<evidence type="ECO:0000305" key="5"/>
<evidence type="ECO:0000305" key="6">
    <source>
    </source>
</evidence>
<evidence type="ECO:0000312" key="7">
    <source>
        <dbReference type="EMBL" id="MBJ2345991.1"/>
    </source>
</evidence>
<reference key="1">
    <citation type="journal article" date="2022" name="RSC Chem. Biol.">
        <title>Canavanine utilization via homoserine and hydroxyguanidine by a PLP-dependent gamma-lyase in Pseudomonadaceae and Rhizobiales.</title>
        <authorList>
            <person name="Hauth F."/>
            <person name="Buck H."/>
            <person name="Stanoppi M."/>
            <person name="Hartig J.S."/>
        </authorList>
    </citation>
    <scope>NUCLEOTIDE SEQUENCE [LARGE SCALE GENOMIC DNA]</scope>
    <scope>FUNCTION</scope>
    <scope>INDUCTION</scope>
    <source>
        <strain>DSM 112525 / LMG 32336 / HB002</strain>
    </source>
</reference>
<protein>
    <recommendedName>
        <fullName evidence="4">Aspartate ammonia-lyase</fullName>
        <shortName evidence="5">Aspartase</shortName>
        <ecNumber evidence="6">4.3.1.1</ecNumber>
    </recommendedName>
</protein>
<keyword id="KW-0456">Lyase</keyword>